<keyword id="KW-0474">Menaquinone biosynthesis</keyword>
<keyword id="KW-0489">Methyltransferase</keyword>
<keyword id="KW-1185">Reference proteome</keyword>
<keyword id="KW-0949">S-adenosyl-L-methionine</keyword>
<keyword id="KW-0808">Transferase</keyword>
<keyword id="KW-0831">Ubiquinone biosynthesis</keyword>
<reference key="1">
    <citation type="journal article" date="2000" name="Nature">
        <title>The genome sequence of the food-borne pathogen Campylobacter jejuni reveals hypervariable sequences.</title>
        <authorList>
            <person name="Parkhill J."/>
            <person name="Wren B.W."/>
            <person name="Mungall K.L."/>
            <person name="Ketley J.M."/>
            <person name="Churcher C.M."/>
            <person name="Basham D."/>
            <person name="Chillingworth T."/>
            <person name="Davies R.M."/>
            <person name="Feltwell T."/>
            <person name="Holroyd S."/>
            <person name="Jagels K."/>
            <person name="Karlyshev A.V."/>
            <person name="Moule S."/>
            <person name="Pallen M.J."/>
            <person name="Penn C.W."/>
            <person name="Quail M.A."/>
            <person name="Rajandream M.A."/>
            <person name="Rutherford K.M."/>
            <person name="van Vliet A.H.M."/>
            <person name="Whitehead S."/>
            <person name="Barrell B.G."/>
        </authorList>
    </citation>
    <scope>NUCLEOTIDE SEQUENCE [LARGE SCALE GENOMIC DNA]</scope>
    <source>
        <strain>ATCC 700819 / NCTC 11168</strain>
    </source>
</reference>
<protein>
    <recommendedName>
        <fullName evidence="1">Ubiquinone/menaquinone biosynthesis C-methyltransferase UbiE</fullName>
        <ecNumber evidence="1">2.1.1.163</ecNumber>
        <ecNumber evidence="1">2.1.1.201</ecNumber>
    </recommendedName>
    <alternativeName>
        <fullName evidence="1">2-methoxy-6-polyprenyl-1,4-benzoquinol methylase</fullName>
    </alternativeName>
    <alternativeName>
        <fullName evidence="1">Demethylmenaquinone methyltransferase</fullName>
    </alternativeName>
</protein>
<dbReference type="EC" id="2.1.1.163" evidence="1"/>
<dbReference type="EC" id="2.1.1.201" evidence="1"/>
<dbReference type="EMBL" id="AL111168">
    <property type="protein sequence ID" value="CAL34475.1"/>
    <property type="molecule type" value="Genomic_DNA"/>
</dbReference>
<dbReference type="PIR" id="H81451">
    <property type="entry name" value="H81451"/>
</dbReference>
<dbReference type="RefSeq" id="WP_002858648.1">
    <property type="nucleotide sequence ID" value="NZ_SZUC01000004.1"/>
</dbReference>
<dbReference type="RefSeq" id="YP_002343762.1">
    <property type="nucleotide sequence ID" value="NC_002163.1"/>
</dbReference>
<dbReference type="SMR" id="Q9PIH5"/>
<dbReference type="IntAct" id="Q9PIH5">
    <property type="interactions" value="1"/>
</dbReference>
<dbReference type="STRING" id="192222.Cj0324"/>
<dbReference type="PaxDb" id="192222-Cj0324"/>
<dbReference type="DNASU" id="904648"/>
<dbReference type="EnsemblBacteria" id="CAL34475">
    <property type="protein sequence ID" value="CAL34475"/>
    <property type="gene ID" value="Cj0324"/>
</dbReference>
<dbReference type="GeneID" id="904648"/>
<dbReference type="KEGG" id="cje:Cj0324"/>
<dbReference type="PATRIC" id="fig|192222.6.peg.316"/>
<dbReference type="eggNOG" id="COG2226">
    <property type="taxonomic scope" value="Bacteria"/>
</dbReference>
<dbReference type="HOGENOM" id="CLU_037990_0_0_7"/>
<dbReference type="OrthoDB" id="9808140at2"/>
<dbReference type="UniPathway" id="UPA00079">
    <property type="reaction ID" value="UER00169"/>
</dbReference>
<dbReference type="UniPathway" id="UPA00232"/>
<dbReference type="Proteomes" id="UP000000799">
    <property type="component" value="Chromosome"/>
</dbReference>
<dbReference type="GO" id="GO:0008425">
    <property type="term" value="F:2-methoxy-6-polyprenyl-1,4-benzoquinol methyltransferase activity"/>
    <property type="evidence" value="ECO:0007669"/>
    <property type="project" value="UniProtKB-EC"/>
</dbReference>
<dbReference type="GO" id="GO:0043770">
    <property type="term" value="F:demethylmenaquinone methyltransferase activity"/>
    <property type="evidence" value="ECO:0007669"/>
    <property type="project" value="UniProtKB-UniRule"/>
</dbReference>
<dbReference type="GO" id="GO:0009234">
    <property type="term" value="P:menaquinone biosynthetic process"/>
    <property type="evidence" value="ECO:0007669"/>
    <property type="project" value="UniProtKB-UniRule"/>
</dbReference>
<dbReference type="GO" id="GO:0032259">
    <property type="term" value="P:methylation"/>
    <property type="evidence" value="ECO:0007669"/>
    <property type="project" value="UniProtKB-KW"/>
</dbReference>
<dbReference type="CDD" id="cd02440">
    <property type="entry name" value="AdoMet_MTases"/>
    <property type="match status" value="1"/>
</dbReference>
<dbReference type="Gene3D" id="3.40.50.150">
    <property type="entry name" value="Vaccinia Virus protein VP39"/>
    <property type="match status" value="1"/>
</dbReference>
<dbReference type="HAMAP" id="MF_01813">
    <property type="entry name" value="MenG_UbiE_methyltr"/>
    <property type="match status" value="1"/>
</dbReference>
<dbReference type="InterPro" id="IPR029063">
    <property type="entry name" value="SAM-dependent_MTases_sf"/>
</dbReference>
<dbReference type="InterPro" id="IPR004033">
    <property type="entry name" value="UbiE/COQ5_MeTrFase"/>
</dbReference>
<dbReference type="InterPro" id="IPR023576">
    <property type="entry name" value="UbiE/COQ5_MeTrFase_CS"/>
</dbReference>
<dbReference type="NCBIfam" id="TIGR01934">
    <property type="entry name" value="MenG_MenH_UbiE"/>
    <property type="match status" value="1"/>
</dbReference>
<dbReference type="NCBIfam" id="NF001244">
    <property type="entry name" value="PRK00216.1-5"/>
    <property type="match status" value="1"/>
</dbReference>
<dbReference type="PANTHER" id="PTHR43591:SF24">
    <property type="entry name" value="2-METHOXY-6-POLYPRENYL-1,4-BENZOQUINOL METHYLASE, MITOCHONDRIAL"/>
    <property type="match status" value="1"/>
</dbReference>
<dbReference type="PANTHER" id="PTHR43591">
    <property type="entry name" value="METHYLTRANSFERASE"/>
    <property type="match status" value="1"/>
</dbReference>
<dbReference type="Pfam" id="PF01209">
    <property type="entry name" value="Ubie_methyltran"/>
    <property type="match status" value="1"/>
</dbReference>
<dbReference type="SUPFAM" id="SSF53335">
    <property type="entry name" value="S-adenosyl-L-methionine-dependent methyltransferases"/>
    <property type="match status" value="1"/>
</dbReference>
<dbReference type="PROSITE" id="PS51608">
    <property type="entry name" value="SAM_MT_UBIE"/>
    <property type="match status" value="1"/>
</dbReference>
<dbReference type="PROSITE" id="PS01183">
    <property type="entry name" value="UBIE_1"/>
    <property type="match status" value="1"/>
</dbReference>
<dbReference type="PROSITE" id="PS01184">
    <property type="entry name" value="UBIE_2"/>
    <property type="match status" value="1"/>
</dbReference>
<sequence length="235" mass="26516">MQKQEKIIEMFNQIAPTYDKANRILSFGADVAWRKKACQRVMSLYLKKDLKIADIACGTGDMIEIWQESALKMEKNILNIKGIDPSSGMLNVAKEKFPNVEFIKAGAQNLPLESQSLDILSISYGIRNVVERQKALSEFARVLQKDGILVVLEFTKREKGGFIAACRDFYLKNILPSIGGIISKNKSAYEYLPNSIEGFLSKKEFILELKNAGFEMLDYKSFSFGVSSMFIAKKL</sequence>
<feature type="chain" id="PRO_0000193260" description="Ubiquinone/menaquinone biosynthesis C-methyltransferase UbiE">
    <location>
        <begin position="1"/>
        <end position="235"/>
    </location>
</feature>
<feature type="binding site" evidence="1">
    <location>
        <position position="59"/>
    </location>
    <ligand>
        <name>S-adenosyl-L-methionine</name>
        <dbReference type="ChEBI" id="CHEBI:59789"/>
    </ligand>
</feature>
<feature type="binding site" evidence="1">
    <location>
        <position position="84"/>
    </location>
    <ligand>
        <name>S-adenosyl-L-methionine</name>
        <dbReference type="ChEBI" id="CHEBI:59789"/>
    </ligand>
</feature>
<feature type="binding site" evidence="1">
    <location>
        <position position="123"/>
    </location>
    <ligand>
        <name>S-adenosyl-L-methionine</name>
        <dbReference type="ChEBI" id="CHEBI:59789"/>
    </ligand>
</feature>
<organism>
    <name type="scientific">Campylobacter jejuni subsp. jejuni serotype O:2 (strain ATCC 700819 / NCTC 11168)</name>
    <dbReference type="NCBI Taxonomy" id="192222"/>
    <lineage>
        <taxon>Bacteria</taxon>
        <taxon>Pseudomonadati</taxon>
        <taxon>Campylobacterota</taxon>
        <taxon>Epsilonproteobacteria</taxon>
        <taxon>Campylobacterales</taxon>
        <taxon>Campylobacteraceae</taxon>
        <taxon>Campylobacter</taxon>
    </lineage>
</organism>
<comment type="function">
    <text evidence="1">Methyltransferase required for the conversion of demethylmenaquinol (DMKH2) to menaquinol (MKH2) and the conversion of 2-polyprenyl-6-methoxy-1,4-benzoquinol (DDMQH2) to 2-polyprenyl-3-methyl-6-methoxy-1,4-benzoquinol (DMQH2).</text>
</comment>
<comment type="catalytic activity">
    <reaction evidence="1">
        <text>a 2-demethylmenaquinol + S-adenosyl-L-methionine = a menaquinol + S-adenosyl-L-homocysteine + H(+)</text>
        <dbReference type="Rhea" id="RHEA:42640"/>
        <dbReference type="Rhea" id="RHEA-COMP:9539"/>
        <dbReference type="Rhea" id="RHEA-COMP:9563"/>
        <dbReference type="ChEBI" id="CHEBI:15378"/>
        <dbReference type="ChEBI" id="CHEBI:18151"/>
        <dbReference type="ChEBI" id="CHEBI:55437"/>
        <dbReference type="ChEBI" id="CHEBI:57856"/>
        <dbReference type="ChEBI" id="CHEBI:59789"/>
        <dbReference type="EC" id="2.1.1.163"/>
    </reaction>
</comment>
<comment type="catalytic activity">
    <reaction evidence="1">
        <text>a 2-methoxy-6-(all-trans-polyprenyl)benzene-1,4-diol + S-adenosyl-L-methionine = a 5-methoxy-2-methyl-3-(all-trans-polyprenyl)benzene-1,4-diol + S-adenosyl-L-homocysteine + H(+)</text>
        <dbReference type="Rhea" id="RHEA:28286"/>
        <dbReference type="Rhea" id="RHEA-COMP:10858"/>
        <dbReference type="Rhea" id="RHEA-COMP:10859"/>
        <dbReference type="ChEBI" id="CHEBI:15378"/>
        <dbReference type="ChEBI" id="CHEBI:57856"/>
        <dbReference type="ChEBI" id="CHEBI:59789"/>
        <dbReference type="ChEBI" id="CHEBI:84166"/>
        <dbReference type="ChEBI" id="CHEBI:84167"/>
        <dbReference type="EC" id="2.1.1.201"/>
    </reaction>
</comment>
<comment type="pathway">
    <text evidence="1">Quinol/quinone metabolism; menaquinone biosynthesis; menaquinol from 1,4-dihydroxy-2-naphthoate: step 2/2.</text>
</comment>
<comment type="pathway">
    <text evidence="1">Cofactor biosynthesis; ubiquinone biosynthesis.</text>
</comment>
<comment type="similarity">
    <text evidence="1">Belongs to the class I-like SAM-binding methyltransferase superfamily. MenG/UbiE family.</text>
</comment>
<name>UBIE_CAMJE</name>
<evidence type="ECO:0000255" key="1">
    <source>
        <dbReference type="HAMAP-Rule" id="MF_01813"/>
    </source>
</evidence>
<proteinExistence type="inferred from homology"/>
<accession>Q9PIH5</accession>
<accession>Q0PBI5</accession>
<gene>
    <name evidence="1" type="primary">ubiE</name>
    <name type="ordered locus">Cj0324</name>
</gene>